<gene>
    <name type="primary">SRP54</name>
</gene>
<evidence type="ECO:0000250" key="1"/>
<evidence type="ECO:0000250" key="2">
    <source>
        <dbReference type="UniProtKB" id="P61010"/>
    </source>
</evidence>
<evidence type="ECO:0000250" key="3">
    <source>
        <dbReference type="UniProtKB" id="P61011"/>
    </source>
</evidence>
<evidence type="ECO:0000305" key="4"/>
<protein>
    <recommendedName>
        <fullName>Signal recognition particle subunit SRP54</fullName>
        <ecNumber evidence="3">3.6.5.4</ecNumber>
    </recommendedName>
    <alternativeName>
        <fullName>Signal recognition particle 54 kDa protein</fullName>
    </alternativeName>
</protein>
<reference key="1">
    <citation type="submission" date="2004-11" db="EMBL/GenBank/DDBJ databases">
        <authorList>
            <consortium name="The German cDNA consortium"/>
        </authorList>
    </citation>
    <scope>NUCLEOTIDE SEQUENCE [LARGE SCALE MRNA]</scope>
    <source>
        <tissue>Brain cortex</tissue>
    </source>
</reference>
<dbReference type="EC" id="3.6.5.4" evidence="3"/>
<dbReference type="EMBL" id="CR861178">
    <property type="protein sequence ID" value="CAH93250.1"/>
    <property type="molecule type" value="mRNA"/>
</dbReference>
<dbReference type="RefSeq" id="NP_001126912.1">
    <property type="nucleotide sequence ID" value="NM_001133440.1"/>
</dbReference>
<dbReference type="RefSeq" id="XP_024087051.1">
    <property type="nucleotide sequence ID" value="XM_024231283.3"/>
</dbReference>
<dbReference type="RefSeq" id="XP_054385783.1">
    <property type="nucleotide sequence ID" value="XM_054529808.1"/>
</dbReference>
<dbReference type="RefSeq" id="XP_054385785.1">
    <property type="nucleotide sequence ID" value="XM_054529810.2"/>
</dbReference>
<dbReference type="SMR" id="Q5R4R6"/>
<dbReference type="FunCoup" id="Q5R4R6">
    <property type="interactions" value="3432"/>
</dbReference>
<dbReference type="STRING" id="9601.ENSPPYP00000006521"/>
<dbReference type="Ensembl" id="ENSPPYT00000036737.1">
    <property type="protein sequence ID" value="ENSPPYP00000028972.1"/>
    <property type="gene ID" value="ENSPPYG00000005739.3"/>
</dbReference>
<dbReference type="GeneID" id="100173929"/>
<dbReference type="KEGG" id="pon:100173929"/>
<dbReference type="CTD" id="6729"/>
<dbReference type="eggNOG" id="KOG0780">
    <property type="taxonomic scope" value="Eukaryota"/>
</dbReference>
<dbReference type="GeneTree" id="ENSGT00550000074824"/>
<dbReference type="InParanoid" id="Q5R4R6"/>
<dbReference type="OMA" id="GMTGQDA"/>
<dbReference type="OrthoDB" id="10250817at2759"/>
<dbReference type="Proteomes" id="UP000001595">
    <property type="component" value="Chromosome 14"/>
</dbReference>
<dbReference type="GO" id="GO:0005829">
    <property type="term" value="C:cytosol"/>
    <property type="evidence" value="ECO:0007669"/>
    <property type="project" value="Ensembl"/>
</dbReference>
<dbReference type="GO" id="GO:0005783">
    <property type="term" value="C:endoplasmic reticulum"/>
    <property type="evidence" value="ECO:0007669"/>
    <property type="project" value="UniProtKB-SubCell"/>
</dbReference>
<dbReference type="GO" id="GO:0016607">
    <property type="term" value="C:nuclear speck"/>
    <property type="evidence" value="ECO:0007669"/>
    <property type="project" value="UniProtKB-SubCell"/>
</dbReference>
<dbReference type="GO" id="GO:0005634">
    <property type="term" value="C:nucleus"/>
    <property type="evidence" value="ECO:0000250"/>
    <property type="project" value="UniProtKB"/>
</dbReference>
<dbReference type="GO" id="GO:0005786">
    <property type="term" value="C:signal recognition particle, endoplasmic reticulum targeting"/>
    <property type="evidence" value="ECO:0000250"/>
    <property type="project" value="UniProtKB"/>
</dbReference>
<dbReference type="GO" id="GO:0008312">
    <property type="term" value="F:7S RNA binding"/>
    <property type="evidence" value="ECO:0000250"/>
    <property type="project" value="UniProtKB"/>
</dbReference>
<dbReference type="GO" id="GO:0016887">
    <property type="term" value="F:ATP hydrolysis activity"/>
    <property type="evidence" value="ECO:0007669"/>
    <property type="project" value="InterPro"/>
</dbReference>
<dbReference type="GO" id="GO:0030942">
    <property type="term" value="F:endoplasmic reticulum signal peptide binding"/>
    <property type="evidence" value="ECO:0000250"/>
    <property type="project" value="UniProtKB"/>
</dbReference>
<dbReference type="GO" id="GO:0019003">
    <property type="term" value="F:GDP binding"/>
    <property type="evidence" value="ECO:0000250"/>
    <property type="project" value="UniProtKB"/>
</dbReference>
<dbReference type="GO" id="GO:0005525">
    <property type="term" value="F:GTP binding"/>
    <property type="evidence" value="ECO:0000250"/>
    <property type="project" value="UniProtKB"/>
</dbReference>
<dbReference type="GO" id="GO:0003924">
    <property type="term" value="F:GTPase activity"/>
    <property type="evidence" value="ECO:0000250"/>
    <property type="project" value="UniProtKB"/>
</dbReference>
<dbReference type="GO" id="GO:0043021">
    <property type="term" value="F:ribonucleoprotein complex binding"/>
    <property type="evidence" value="ECO:0007669"/>
    <property type="project" value="Ensembl"/>
</dbReference>
<dbReference type="GO" id="GO:0031017">
    <property type="term" value="P:exocrine pancreas development"/>
    <property type="evidence" value="ECO:0000250"/>
    <property type="project" value="UniProtKB"/>
</dbReference>
<dbReference type="GO" id="GO:0030851">
    <property type="term" value="P:granulocyte differentiation"/>
    <property type="evidence" value="ECO:0000250"/>
    <property type="project" value="UniProtKB"/>
</dbReference>
<dbReference type="GO" id="GO:0030593">
    <property type="term" value="P:neutrophil chemotaxis"/>
    <property type="evidence" value="ECO:0000250"/>
    <property type="project" value="UniProtKB"/>
</dbReference>
<dbReference type="GO" id="GO:0045047">
    <property type="term" value="P:protein targeting to ER"/>
    <property type="evidence" value="ECO:0000250"/>
    <property type="project" value="UniProtKB"/>
</dbReference>
<dbReference type="GO" id="GO:0006616">
    <property type="term" value="P:SRP-dependent cotranslational protein targeting to membrane, translocation"/>
    <property type="evidence" value="ECO:0007669"/>
    <property type="project" value="TreeGrafter"/>
</dbReference>
<dbReference type="CDD" id="cd17875">
    <property type="entry name" value="SRP54_G"/>
    <property type="match status" value="1"/>
</dbReference>
<dbReference type="FunFam" id="1.10.260.30:FF:000002">
    <property type="entry name" value="Signal recognition particle 54 kDa protein"/>
    <property type="match status" value="1"/>
</dbReference>
<dbReference type="FunFam" id="1.20.120.140:FF:000003">
    <property type="entry name" value="Signal recognition particle 54 kDa protein"/>
    <property type="match status" value="1"/>
</dbReference>
<dbReference type="FunFam" id="3.40.50.300:FF:000022">
    <property type="entry name" value="Signal recognition particle 54 kDa subunit"/>
    <property type="match status" value="1"/>
</dbReference>
<dbReference type="Gene3D" id="3.40.50.300">
    <property type="entry name" value="P-loop containing nucleotide triphosphate hydrolases"/>
    <property type="match status" value="1"/>
</dbReference>
<dbReference type="Gene3D" id="1.20.120.140">
    <property type="entry name" value="Signal recognition particle SRP54, nucleotide-binding domain"/>
    <property type="match status" value="1"/>
</dbReference>
<dbReference type="Gene3D" id="1.10.260.30">
    <property type="entry name" value="Signal recognition particle, SRP54 subunit, M-domain"/>
    <property type="match status" value="1"/>
</dbReference>
<dbReference type="HAMAP" id="MF_00306">
    <property type="entry name" value="SRP54"/>
    <property type="match status" value="1"/>
</dbReference>
<dbReference type="InterPro" id="IPR003593">
    <property type="entry name" value="AAA+_ATPase"/>
</dbReference>
<dbReference type="InterPro" id="IPR027417">
    <property type="entry name" value="P-loop_NTPase"/>
</dbReference>
<dbReference type="InterPro" id="IPR036891">
    <property type="entry name" value="Signal_recog_part_SRP54_M_sf"/>
</dbReference>
<dbReference type="InterPro" id="IPR013822">
    <property type="entry name" value="Signal_recog_particl_SRP54_hlx"/>
</dbReference>
<dbReference type="InterPro" id="IPR004125">
    <property type="entry name" value="Signal_recog_particle_SRP54_M"/>
</dbReference>
<dbReference type="InterPro" id="IPR036225">
    <property type="entry name" value="SRP/SRP_N"/>
</dbReference>
<dbReference type="InterPro" id="IPR022941">
    <property type="entry name" value="SRP54"/>
</dbReference>
<dbReference type="InterPro" id="IPR006325">
    <property type="entry name" value="SRP54_euk"/>
</dbReference>
<dbReference type="InterPro" id="IPR000897">
    <property type="entry name" value="SRP54_GTPase_dom"/>
</dbReference>
<dbReference type="InterPro" id="IPR042101">
    <property type="entry name" value="SRP54_N_sf"/>
</dbReference>
<dbReference type="NCBIfam" id="TIGR01425">
    <property type="entry name" value="SRP54_euk"/>
    <property type="match status" value="1"/>
</dbReference>
<dbReference type="PANTHER" id="PTHR11564">
    <property type="entry name" value="SIGNAL RECOGNITION PARTICLE 54K PROTEIN SRP54"/>
    <property type="match status" value="1"/>
</dbReference>
<dbReference type="PANTHER" id="PTHR11564:SF5">
    <property type="entry name" value="SIGNAL RECOGNITION PARTICLE SUBUNIT SRP54"/>
    <property type="match status" value="1"/>
</dbReference>
<dbReference type="Pfam" id="PF00448">
    <property type="entry name" value="SRP54"/>
    <property type="match status" value="1"/>
</dbReference>
<dbReference type="Pfam" id="PF02881">
    <property type="entry name" value="SRP54_N"/>
    <property type="match status" value="1"/>
</dbReference>
<dbReference type="Pfam" id="PF02978">
    <property type="entry name" value="SRP_SPB"/>
    <property type="match status" value="1"/>
</dbReference>
<dbReference type="SMART" id="SM00382">
    <property type="entry name" value="AAA"/>
    <property type="match status" value="1"/>
</dbReference>
<dbReference type="SMART" id="SM00962">
    <property type="entry name" value="SRP54"/>
    <property type="match status" value="1"/>
</dbReference>
<dbReference type="SMART" id="SM00963">
    <property type="entry name" value="SRP54_N"/>
    <property type="match status" value="1"/>
</dbReference>
<dbReference type="SUPFAM" id="SSF47364">
    <property type="entry name" value="Domain of the SRP/SRP receptor G-proteins"/>
    <property type="match status" value="1"/>
</dbReference>
<dbReference type="SUPFAM" id="SSF52540">
    <property type="entry name" value="P-loop containing nucleoside triphosphate hydrolases"/>
    <property type="match status" value="1"/>
</dbReference>
<dbReference type="SUPFAM" id="SSF47446">
    <property type="entry name" value="Signal peptide-binding domain"/>
    <property type="match status" value="1"/>
</dbReference>
<dbReference type="PROSITE" id="PS00300">
    <property type="entry name" value="SRP54"/>
    <property type="match status" value="1"/>
</dbReference>
<organism>
    <name type="scientific">Pongo abelii</name>
    <name type="common">Sumatran orangutan</name>
    <name type="synonym">Pongo pygmaeus abelii</name>
    <dbReference type="NCBI Taxonomy" id="9601"/>
    <lineage>
        <taxon>Eukaryota</taxon>
        <taxon>Metazoa</taxon>
        <taxon>Chordata</taxon>
        <taxon>Craniata</taxon>
        <taxon>Vertebrata</taxon>
        <taxon>Euteleostomi</taxon>
        <taxon>Mammalia</taxon>
        <taxon>Eutheria</taxon>
        <taxon>Euarchontoglires</taxon>
        <taxon>Primates</taxon>
        <taxon>Haplorrhini</taxon>
        <taxon>Catarrhini</taxon>
        <taxon>Hominidae</taxon>
        <taxon>Pongo</taxon>
    </lineage>
</organism>
<sequence length="504" mass="55705">MVLADLGRKITSALRSLSNATIINEEVLNAMLKEVCTALLEADVNIKLVKQLRENVKSAIDLEEMASGLNKRKMIQHAVFKELVKLVDPGVKAWTPTKGKQNVIMFVGLQGSGKTTTCSKLAYYYQRKGWKTCLICADTFRAGAFDQLKQNATKARIPFYGSYTEMDPVIIASEGVEKFKNENFEIIIVDTSGRHKQEDSLFEEMLQVANAIQPDNIVYVMDASIGQACEAQAKAFKDKVDVASVIVTKLDGHAKGGGALSAVAATKSPIIFIGTGEHIDDFEPFKTQPFISKLLGMGDIEGLIDKVNELKLDDNEALIEKLKHGQFTLRDMYEQFQNIMKMGPFSQILGMIPGFGTDFMSKGNEQESMARLKKLMTIMDSMNDQELDSTDGAKVFSKQPGRIQRVARGSGVSTRDVQELLTQYTKFAQMVKKMGGIKGLFKGGDMSKNVSQSQMAKLNQQMAKMMDPRVLHHMGGMAGLQSMMRQFQQGAAGNMKGMMGFNNM</sequence>
<feature type="chain" id="PRO_0000101195" description="Signal recognition particle subunit SRP54">
    <location>
        <begin position="1"/>
        <end position="504"/>
    </location>
</feature>
<feature type="region of interest" description="NG-domain" evidence="3">
    <location>
        <begin position="1"/>
        <end position="295"/>
    </location>
</feature>
<feature type="region of interest" description="M-domain" evidence="3">
    <location>
        <begin position="296"/>
        <end position="504"/>
    </location>
</feature>
<feature type="binding site" evidence="1">
    <location>
        <begin position="108"/>
        <end position="115"/>
    </location>
    <ligand>
        <name>GTP</name>
        <dbReference type="ChEBI" id="CHEBI:37565"/>
    </ligand>
</feature>
<feature type="binding site" evidence="1">
    <location>
        <begin position="190"/>
        <end position="194"/>
    </location>
    <ligand>
        <name>GTP</name>
        <dbReference type="ChEBI" id="CHEBI:37565"/>
    </ligand>
</feature>
<feature type="binding site" evidence="1">
    <location>
        <begin position="248"/>
        <end position="251"/>
    </location>
    <ligand>
        <name>GTP</name>
        <dbReference type="ChEBI" id="CHEBI:37565"/>
    </ligand>
</feature>
<proteinExistence type="evidence at transcript level"/>
<accession>Q5R4R6</accession>
<name>SRP54_PONAB</name>
<keyword id="KW-0963">Cytoplasm</keyword>
<keyword id="KW-0256">Endoplasmic reticulum</keyword>
<keyword id="KW-0342">GTP-binding</keyword>
<keyword id="KW-0378">Hydrolase</keyword>
<keyword id="KW-0547">Nucleotide-binding</keyword>
<keyword id="KW-0539">Nucleus</keyword>
<keyword id="KW-1185">Reference proteome</keyword>
<keyword id="KW-0687">Ribonucleoprotein</keyword>
<keyword id="KW-0694">RNA-binding</keyword>
<keyword id="KW-0733">Signal recognition particle</keyword>
<comment type="function">
    <text evidence="2 3">Component of the signal recognition particle (SRP) complex, a ribonucleoprotein complex that mediates the cotranslational targeting of secretory and membrane proteins to the endoplasmic reticulum (ER) (By similarity). As part of the SRP complex, associates with the SRP receptor (SR) component SRPRA to target secretory proteins to the endoplasmic reticulum membrane (By similarity). Binds to the signal sequence of presecretory proteins when they emerge from the ribosomes (By similarity). Displays basal GTPase activity, and stimulates reciprocal GTPase activation of the SR subunit SRPRA (By similarity). Forms a guanosine 5'-triphosphate (GTP)-dependent complex with the SR subunit SRPRA (By similarity). SR compaction and GTPase mediated rearrangement of SR drive SRP-mediated cotranslational protein translocation into the ER (By similarity). Requires the presence of SRP9/SRP14 and/or SRP19 to stably interact with RNA (By similarity). Plays a role in proliferation and differentiation of granulocytic cells, neutrophils migration capacity and exocrine pancreas development (By similarity).</text>
</comment>
<comment type="catalytic activity">
    <reaction evidence="3">
        <text>GTP + H2O = GDP + phosphate + H(+)</text>
        <dbReference type="Rhea" id="RHEA:19669"/>
        <dbReference type="ChEBI" id="CHEBI:15377"/>
        <dbReference type="ChEBI" id="CHEBI:15378"/>
        <dbReference type="ChEBI" id="CHEBI:37565"/>
        <dbReference type="ChEBI" id="CHEBI:43474"/>
        <dbReference type="ChEBI" id="CHEBI:58189"/>
        <dbReference type="EC" id="3.6.5.4"/>
    </reaction>
    <physiologicalReaction direction="left-to-right" evidence="3">
        <dbReference type="Rhea" id="RHEA:19670"/>
    </physiologicalReaction>
</comment>
<comment type="subunit">
    <text evidence="3">Component of a signal recognition particle (SRP) complex that consists of a 7SL RNA molecule of 300 nucleotides and six protein subunits: SRP72, SRP68, SRP54, SRP19, SRP14 and SRP9 (By similarity). Interacts with RNPS1 (By similarity). Interacts with the SRP receptor subunit SRPRA (By similarity).</text>
</comment>
<comment type="subcellular location">
    <subcellularLocation>
        <location evidence="3">Nucleus speckle</location>
    </subcellularLocation>
    <subcellularLocation>
        <location evidence="3">Cytoplasm</location>
    </subcellularLocation>
    <subcellularLocation>
        <location evidence="3">Endoplasmic reticulum</location>
    </subcellularLocation>
</comment>
<comment type="domain">
    <text evidence="3">The NG domain, also named G domain, is a special guanosine triphosphatase (GTPase) domain, which binds GTP and forms a guanosine 5'-triphosphate (GTP)-dependent complex with a homologous NG domain in the SRP receptor subunit SRPRA (By similarity). The two NG domains undergo cooperative rearrangements upon their assembly, which culminate in the reciprocal activation of the GTPase activity of one another (By similarity). SRP receptor compaction upon binding with cargo-loaded SRP and GTPase rearrangement drive SRP-mediated cotranslational protein translocation into the ER (By similarity).</text>
</comment>
<comment type="domain">
    <text evidence="3">The M domain binds the 7SL RNA in presence of SRP19 and binds the signal sequence of presecretory proteins.</text>
</comment>
<comment type="similarity">
    <text evidence="4">Belongs to the GTP-binding SRP family. SRP54 subfamily.</text>
</comment>